<sequence length="555" mass="59856">MTHLSDLDIANQSTLQPIKDIAASVGISEDALEPYGHYKAKIDINKITPRENKGKVVLVTAMSPTPAGEGKSTVTVGLADAFHELNKNVMVALREPALGPTFGIKGGATGGGYAQVLPMEDINLHFNGDFHAITTANNALSAFIDNHIHQGNELGIDQRRIEWKRVLDMNDRALRHVNVGLGGPTNGVPREDGFNITVASEIMAILCLSRSIKDLKDKISRITIGYTRDRKPVTVADLKVQGALAMILKDAIKPNLVQSIEGTPALVHGGPFANIAHGCNSILATETARDLADIVVTEAGFGSDLGAEKFMDIKAREAGFDPAAVVVVATIRALKMHGGVAKDNLKEENVEAVKAGIVNLERHVNNIKKFGVEPVVAINAFIHDTDAEVEYVKSWAKENNVRIALTEVWEKGGKGGVDLANEVLEVIDQPNSFKPLYELELPLEQKIEKIVTEIYGGSKVTFSSKAQKQLKQFKENGWDNYPVCMAKTQYSFSDDQTLLGAPSGFEITIRELEAKTGAGFIVALTGAIMTMPGLPKKPAALNMDVTDDGHAIGLF</sequence>
<dbReference type="EC" id="6.3.4.3" evidence="1"/>
<dbReference type="EMBL" id="BA000033">
    <property type="protein sequence ID" value="BAB95540.1"/>
    <property type="molecule type" value="Genomic_DNA"/>
</dbReference>
<dbReference type="RefSeq" id="WP_000149412.1">
    <property type="nucleotide sequence ID" value="NC_003923.1"/>
</dbReference>
<dbReference type="SMR" id="Q8NW37"/>
<dbReference type="KEGG" id="sam:MW1675"/>
<dbReference type="HOGENOM" id="CLU_003601_3_3_9"/>
<dbReference type="UniPathway" id="UPA00193"/>
<dbReference type="GO" id="GO:0005524">
    <property type="term" value="F:ATP binding"/>
    <property type="evidence" value="ECO:0007669"/>
    <property type="project" value="UniProtKB-UniRule"/>
</dbReference>
<dbReference type="GO" id="GO:0004329">
    <property type="term" value="F:formate-tetrahydrofolate ligase activity"/>
    <property type="evidence" value="ECO:0007669"/>
    <property type="project" value="UniProtKB-UniRule"/>
</dbReference>
<dbReference type="GO" id="GO:0035999">
    <property type="term" value="P:tetrahydrofolate interconversion"/>
    <property type="evidence" value="ECO:0007669"/>
    <property type="project" value="UniProtKB-UniRule"/>
</dbReference>
<dbReference type="CDD" id="cd00477">
    <property type="entry name" value="FTHFS"/>
    <property type="match status" value="1"/>
</dbReference>
<dbReference type="FunFam" id="3.30.1510.10:FF:000001">
    <property type="entry name" value="Formate--tetrahydrofolate ligase"/>
    <property type="match status" value="1"/>
</dbReference>
<dbReference type="FunFam" id="3.10.410.10:FF:000001">
    <property type="entry name" value="Putative formate--tetrahydrofolate ligase"/>
    <property type="match status" value="1"/>
</dbReference>
<dbReference type="Gene3D" id="3.30.1510.10">
    <property type="entry name" value="Domain 2, N(10)-formyltetrahydrofolate synthetase"/>
    <property type="match status" value="1"/>
</dbReference>
<dbReference type="Gene3D" id="3.10.410.10">
    <property type="entry name" value="Formyltetrahydrofolate synthetase, domain 3"/>
    <property type="match status" value="1"/>
</dbReference>
<dbReference type="Gene3D" id="3.40.50.300">
    <property type="entry name" value="P-loop containing nucleotide triphosphate hydrolases"/>
    <property type="match status" value="1"/>
</dbReference>
<dbReference type="HAMAP" id="MF_01543">
    <property type="entry name" value="FTHFS"/>
    <property type="match status" value="1"/>
</dbReference>
<dbReference type="InterPro" id="IPR000559">
    <property type="entry name" value="Formate_THF_ligase"/>
</dbReference>
<dbReference type="InterPro" id="IPR020628">
    <property type="entry name" value="Formate_THF_ligase_CS"/>
</dbReference>
<dbReference type="InterPro" id="IPR027417">
    <property type="entry name" value="P-loop_NTPase"/>
</dbReference>
<dbReference type="NCBIfam" id="NF010030">
    <property type="entry name" value="PRK13505.1"/>
    <property type="match status" value="1"/>
</dbReference>
<dbReference type="Pfam" id="PF01268">
    <property type="entry name" value="FTHFS"/>
    <property type="match status" value="1"/>
</dbReference>
<dbReference type="SUPFAM" id="SSF52540">
    <property type="entry name" value="P-loop containing nucleoside triphosphate hydrolases"/>
    <property type="match status" value="1"/>
</dbReference>
<dbReference type="PROSITE" id="PS00721">
    <property type="entry name" value="FTHFS_1"/>
    <property type="match status" value="1"/>
</dbReference>
<dbReference type="PROSITE" id="PS00722">
    <property type="entry name" value="FTHFS_2"/>
    <property type="match status" value="1"/>
</dbReference>
<proteinExistence type="inferred from homology"/>
<evidence type="ECO:0000255" key="1">
    <source>
        <dbReference type="HAMAP-Rule" id="MF_01543"/>
    </source>
</evidence>
<keyword id="KW-0067">ATP-binding</keyword>
<keyword id="KW-0436">Ligase</keyword>
<keyword id="KW-0547">Nucleotide-binding</keyword>
<keyword id="KW-0554">One-carbon metabolism</keyword>
<accession>Q8NW37</accession>
<reference key="1">
    <citation type="journal article" date="2002" name="Lancet">
        <title>Genome and virulence determinants of high virulence community-acquired MRSA.</title>
        <authorList>
            <person name="Baba T."/>
            <person name="Takeuchi F."/>
            <person name="Kuroda M."/>
            <person name="Yuzawa H."/>
            <person name="Aoki K."/>
            <person name="Oguchi A."/>
            <person name="Nagai Y."/>
            <person name="Iwama N."/>
            <person name="Asano K."/>
            <person name="Naimi T."/>
            <person name="Kuroda H."/>
            <person name="Cui L."/>
            <person name="Yamamoto K."/>
            <person name="Hiramatsu K."/>
        </authorList>
    </citation>
    <scope>NUCLEOTIDE SEQUENCE [LARGE SCALE GENOMIC DNA]</scope>
    <source>
        <strain>MW2</strain>
    </source>
</reference>
<protein>
    <recommendedName>
        <fullName evidence="1">Formate--tetrahydrofolate ligase</fullName>
        <ecNumber evidence="1">6.3.4.3</ecNumber>
    </recommendedName>
    <alternativeName>
        <fullName evidence="1">Formyltetrahydrofolate synthetase</fullName>
        <shortName evidence="1">FHS</shortName>
        <shortName evidence="1">FTHFS</shortName>
    </alternativeName>
</protein>
<gene>
    <name evidence="1" type="primary">fhs</name>
    <name type="ordered locus">MW1675</name>
</gene>
<feature type="chain" id="PRO_0000199379" description="Formate--tetrahydrofolate ligase">
    <location>
        <begin position="1"/>
        <end position="555"/>
    </location>
</feature>
<feature type="binding site" evidence="1">
    <location>
        <begin position="65"/>
        <end position="72"/>
    </location>
    <ligand>
        <name>ATP</name>
        <dbReference type="ChEBI" id="CHEBI:30616"/>
    </ligand>
</feature>
<comment type="catalytic activity">
    <reaction evidence="1">
        <text>(6S)-5,6,7,8-tetrahydrofolate + formate + ATP = (6R)-10-formyltetrahydrofolate + ADP + phosphate</text>
        <dbReference type="Rhea" id="RHEA:20221"/>
        <dbReference type="ChEBI" id="CHEBI:15740"/>
        <dbReference type="ChEBI" id="CHEBI:30616"/>
        <dbReference type="ChEBI" id="CHEBI:43474"/>
        <dbReference type="ChEBI" id="CHEBI:57453"/>
        <dbReference type="ChEBI" id="CHEBI:195366"/>
        <dbReference type="ChEBI" id="CHEBI:456216"/>
        <dbReference type="EC" id="6.3.4.3"/>
    </reaction>
</comment>
<comment type="pathway">
    <text evidence="1">One-carbon metabolism; tetrahydrofolate interconversion.</text>
</comment>
<comment type="similarity">
    <text evidence="1">Belongs to the formate--tetrahydrofolate ligase family.</text>
</comment>
<organism>
    <name type="scientific">Staphylococcus aureus (strain MW2)</name>
    <dbReference type="NCBI Taxonomy" id="196620"/>
    <lineage>
        <taxon>Bacteria</taxon>
        <taxon>Bacillati</taxon>
        <taxon>Bacillota</taxon>
        <taxon>Bacilli</taxon>
        <taxon>Bacillales</taxon>
        <taxon>Staphylococcaceae</taxon>
        <taxon>Staphylococcus</taxon>
    </lineage>
</organism>
<name>FTHS_STAAW</name>